<sequence length="287" mass="31548">MKSRLFIISQYLLPHHLLSRLAGCIAECRVRWFKNAFTAWFAKRYQVNMSEALVEDLSAYEHFNAFFTRALKPGARPLDETPGAILCPADGAVSQLGPIEHGRIFQAKGHGFSAQELLGGDPAMAAPFMGGEFATIYLSPKDYHRVHMPLAGTLREMVYVPGRLFSVNQTTAENVPELFARNERVVCLFDTERGPMAVVLVGAMIVASIETVWAGLVTPPKRELKTFRYDEASRTPIHLEKGAELGRFKLGSTAIVLFGPEQVKWAESLGAGSAVRMGQQLAAPAQA</sequence>
<dbReference type="EC" id="4.1.1.65" evidence="1"/>
<dbReference type="EMBL" id="AE015451">
    <property type="protein sequence ID" value="AAN70475.1"/>
    <property type="molecule type" value="Genomic_DNA"/>
</dbReference>
<dbReference type="RefSeq" id="NP_747011.1">
    <property type="nucleotide sequence ID" value="NC_002947.4"/>
</dbReference>
<dbReference type="SMR" id="Q88DB9"/>
<dbReference type="STRING" id="160488.PP_4908"/>
<dbReference type="PaxDb" id="160488-PP_4908"/>
<dbReference type="KEGG" id="ppu:PP_4908"/>
<dbReference type="PATRIC" id="fig|160488.4.peg.5243"/>
<dbReference type="eggNOG" id="COG0688">
    <property type="taxonomic scope" value="Bacteria"/>
</dbReference>
<dbReference type="HOGENOM" id="CLU_029061_4_1_6"/>
<dbReference type="OrthoDB" id="9802030at2"/>
<dbReference type="PhylomeDB" id="Q88DB9"/>
<dbReference type="BioCyc" id="PPUT160488:G1G01-5250-MONOMER"/>
<dbReference type="UniPathway" id="UPA00558">
    <property type="reaction ID" value="UER00616"/>
</dbReference>
<dbReference type="Proteomes" id="UP000000556">
    <property type="component" value="Chromosome"/>
</dbReference>
<dbReference type="GO" id="GO:0005886">
    <property type="term" value="C:plasma membrane"/>
    <property type="evidence" value="ECO:0007669"/>
    <property type="project" value="UniProtKB-SubCell"/>
</dbReference>
<dbReference type="GO" id="GO:0004609">
    <property type="term" value="F:phosphatidylserine decarboxylase activity"/>
    <property type="evidence" value="ECO:0007669"/>
    <property type="project" value="UniProtKB-UniRule"/>
</dbReference>
<dbReference type="GO" id="GO:0006646">
    <property type="term" value="P:phosphatidylethanolamine biosynthetic process"/>
    <property type="evidence" value="ECO:0007669"/>
    <property type="project" value="UniProtKB-UniRule"/>
</dbReference>
<dbReference type="HAMAP" id="MF_00662">
    <property type="entry name" value="PS_decarb_PSD_B_type1"/>
    <property type="match status" value="1"/>
</dbReference>
<dbReference type="InterPro" id="IPR003817">
    <property type="entry name" value="PS_Dcarbxylase"/>
</dbReference>
<dbReference type="InterPro" id="IPR033177">
    <property type="entry name" value="PSD-B"/>
</dbReference>
<dbReference type="InterPro" id="IPR033178">
    <property type="entry name" value="PSD_type1_pro"/>
</dbReference>
<dbReference type="NCBIfam" id="TIGR00163">
    <property type="entry name" value="PS_decarb"/>
    <property type="match status" value="1"/>
</dbReference>
<dbReference type="PANTHER" id="PTHR10067">
    <property type="entry name" value="PHOSPHATIDYLSERINE DECARBOXYLASE"/>
    <property type="match status" value="1"/>
</dbReference>
<dbReference type="PANTHER" id="PTHR10067:SF6">
    <property type="entry name" value="PHOSPHATIDYLSERINE DECARBOXYLASE PROENZYME, MITOCHONDRIAL"/>
    <property type="match status" value="1"/>
</dbReference>
<dbReference type="Pfam" id="PF02666">
    <property type="entry name" value="PS_Dcarbxylase"/>
    <property type="match status" value="1"/>
</dbReference>
<name>PSD_PSEPK</name>
<feature type="chain" id="PRO_0000029689" description="Phosphatidylserine decarboxylase beta chain" evidence="1">
    <location>
        <begin position="1"/>
        <end position="251"/>
    </location>
</feature>
<feature type="chain" id="PRO_0000029690" description="Phosphatidylserine decarboxylase alpha chain" evidence="1">
    <location>
        <begin position="252"/>
        <end position="287"/>
    </location>
</feature>
<feature type="active site" description="Charge relay system; for autoendoproteolytic cleavage activity" evidence="1">
    <location>
        <position position="90"/>
    </location>
</feature>
<feature type="active site" description="Charge relay system; for autoendoproteolytic cleavage activity" evidence="1">
    <location>
        <position position="147"/>
    </location>
</feature>
<feature type="active site" description="Charge relay system; for autoendoproteolytic cleavage activity" evidence="1">
    <location>
        <position position="252"/>
    </location>
</feature>
<feature type="active site" description="Schiff-base intermediate with substrate; via pyruvic acid; for decarboxylase activity" evidence="1">
    <location>
        <position position="252"/>
    </location>
</feature>
<feature type="site" description="Cleavage (non-hydrolytic); by autocatalysis" evidence="1">
    <location>
        <begin position="251"/>
        <end position="252"/>
    </location>
</feature>
<feature type="modified residue" description="Pyruvic acid (Ser); by autocatalysis" evidence="1">
    <location>
        <position position="252"/>
    </location>
</feature>
<keyword id="KW-1003">Cell membrane</keyword>
<keyword id="KW-0210">Decarboxylase</keyword>
<keyword id="KW-0444">Lipid biosynthesis</keyword>
<keyword id="KW-0443">Lipid metabolism</keyword>
<keyword id="KW-0456">Lyase</keyword>
<keyword id="KW-0472">Membrane</keyword>
<keyword id="KW-0594">Phospholipid biosynthesis</keyword>
<keyword id="KW-1208">Phospholipid metabolism</keyword>
<keyword id="KW-0670">Pyruvate</keyword>
<keyword id="KW-1185">Reference proteome</keyword>
<keyword id="KW-0865">Zymogen</keyword>
<organism>
    <name type="scientific">Pseudomonas putida (strain ATCC 47054 / DSM 6125 / CFBP 8728 / NCIMB 11950 / KT2440)</name>
    <dbReference type="NCBI Taxonomy" id="160488"/>
    <lineage>
        <taxon>Bacteria</taxon>
        <taxon>Pseudomonadati</taxon>
        <taxon>Pseudomonadota</taxon>
        <taxon>Gammaproteobacteria</taxon>
        <taxon>Pseudomonadales</taxon>
        <taxon>Pseudomonadaceae</taxon>
        <taxon>Pseudomonas</taxon>
    </lineage>
</organism>
<reference key="1">
    <citation type="journal article" date="2002" name="Environ. Microbiol.">
        <title>Complete genome sequence and comparative analysis of the metabolically versatile Pseudomonas putida KT2440.</title>
        <authorList>
            <person name="Nelson K.E."/>
            <person name="Weinel C."/>
            <person name="Paulsen I.T."/>
            <person name="Dodson R.J."/>
            <person name="Hilbert H."/>
            <person name="Martins dos Santos V.A.P."/>
            <person name="Fouts D.E."/>
            <person name="Gill S.R."/>
            <person name="Pop M."/>
            <person name="Holmes M."/>
            <person name="Brinkac L.M."/>
            <person name="Beanan M.J."/>
            <person name="DeBoy R.T."/>
            <person name="Daugherty S.C."/>
            <person name="Kolonay J.F."/>
            <person name="Madupu R."/>
            <person name="Nelson W.C."/>
            <person name="White O."/>
            <person name="Peterson J.D."/>
            <person name="Khouri H.M."/>
            <person name="Hance I."/>
            <person name="Chris Lee P."/>
            <person name="Holtzapple E.K."/>
            <person name="Scanlan D."/>
            <person name="Tran K."/>
            <person name="Moazzez A."/>
            <person name="Utterback T.R."/>
            <person name="Rizzo M."/>
            <person name="Lee K."/>
            <person name="Kosack D."/>
            <person name="Moestl D."/>
            <person name="Wedler H."/>
            <person name="Lauber J."/>
            <person name="Stjepandic D."/>
            <person name="Hoheisel J."/>
            <person name="Straetz M."/>
            <person name="Heim S."/>
            <person name="Kiewitz C."/>
            <person name="Eisen J.A."/>
            <person name="Timmis K.N."/>
            <person name="Duesterhoeft A."/>
            <person name="Tuemmler B."/>
            <person name="Fraser C.M."/>
        </authorList>
    </citation>
    <scope>NUCLEOTIDE SEQUENCE [LARGE SCALE GENOMIC DNA]</scope>
    <source>
        <strain>ATCC 47054 / DSM 6125 / CFBP 8728 / NCIMB 11950 / KT2440</strain>
    </source>
</reference>
<protein>
    <recommendedName>
        <fullName evidence="1">Phosphatidylserine decarboxylase proenzyme</fullName>
        <ecNumber evidence="1">4.1.1.65</ecNumber>
    </recommendedName>
    <component>
        <recommendedName>
            <fullName evidence="1">Phosphatidylserine decarboxylase alpha chain</fullName>
        </recommendedName>
    </component>
    <component>
        <recommendedName>
            <fullName evidence="1">Phosphatidylserine decarboxylase beta chain</fullName>
        </recommendedName>
    </component>
</protein>
<gene>
    <name evidence="1" type="primary">psd</name>
    <name type="ordered locus">PP_4908</name>
</gene>
<comment type="function">
    <text evidence="1">Catalyzes the formation of phosphatidylethanolamine (PtdEtn) from phosphatidylserine (PtdSer).</text>
</comment>
<comment type="catalytic activity">
    <reaction evidence="1">
        <text>a 1,2-diacyl-sn-glycero-3-phospho-L-serine + H(+) = a 1,2-diacyl-sn-glycero-3-phosphoethanolamine + CO2</text>
        <dbReference type="Rhea" id="RHEA:20828"/>
        <dbReference type="ChEBI" id="CHEBI:15378"/>
        <dbReference type="ChEBI" id="CHEBI:16526"/>
        <dbReference type="ChEBI" id="CHEBI:57262"/>
        <dbReference type="ChEBI" id="CHEBI:64612"/>
        <dbReference type="EC" id="4.1.1.65"/>
    </reaction>
</comment>
<comment type="cofactor">
    <cofactor evidence="1">
        <name>pyruvate</name>
        <dbReference type="ChEBI" id="CHEBI:15361"/>
    </cofactor>
    <text evidence="1">Binds 1 pyruvoyl group covalently per subunit.</text>
</comment>
<comment type="pathway">
    <text evidence="1">Phospholipid metabolism; phosphatidylethanolamine biosynthesis; phosphatidylethanolamine from CDP-diacylglycerol: step 2/2.</text>
</comment>
<comment type="subunit">
    <text evidence="1">Heterodimer of a large membrane-associated beta subunit and a small pyruvoyl-containing alpha subunit.</text>
</comment>
<comment type="subcellular location">
    <subcellularLocation>
        <location evidence="1">Cell membrane</location>
        <topology evidence="1">Peripheral membrane protein</topology>
    </subcellularLocation>
</comment>
<comment type="PTM">
    <text evidence="1">Is synthesized initially as an inactive proenzyme. Formation of the active enzyme involves a self-maturation process in which the active site pyruvoyl group is generated from an internal serine residue via an autocatalytic post-translational modification. Two non-identical subunits are generated from the proenzyme in this reaction, and the pyruvate is formed at the N-terminus of the alpha chain, which is derived from the carboxyl end of the proenzyme. The autoendoproteolytic cleavage occurs by a canonical serine protease mechanism, in which the side chain hydroxyl group of the serine supplies its oxygen atom to form the C-terminus of the beta chain, while the remainder of the serine residue undergoes an oxidative deamination to produce ammonia and the pyruvoyl prosthetic group on the alpha chain. During this reaction, the Ser that is part of the protease active site of the proenzyme becomes the pyruvoyl prosthetic group, which constitutes an essential element of the active site of the mature decarboxylase.</text>
</comment>
<comment type="similarity">
    <text evidence="1">Belongs to the phosphatidylserine decarboxylase family. PSD-B subfamily. Prokaryotic type I sub-subfamily.</text>
</comment>
<proteinExistence type="inferred from homology"/>
<accession>Q88DB9</accession>
<evidence type="ECO:0000255" key="1">
    <source>
        <dbReference type="HAMAP-Rule" id="MF_00662"/>
    </source>
</evidence>